<name>ENO_SACEN</name>
<proteinExistence type="inferred from homology"/>
<dbReference type="EC" id="4.2.1.11" evidence="1"/>
<dbReference type="EMBL" id="AM420293">
    <property type="protein sequence ID" value="CAM00178.1"/>
    <property type="molecule type" value="Genomic_DNA"/>
</dbReference>
<dbReference type="RefSeq" id="WP_009944223.1">
    <property type="nucleotide sequence ID" value="NC_009142.1"/>
</dbReference>
<dbReference type="SMR" id="A4F804"/>
<dbReference type="STRING" id="405948.SACE_0838"/>
<dbReference type="KEGG" id="sen:SACE_0838"/>
<dbReference type="eggNOG" id="COG0148">
    <property type="taxonomic scope" value="Bacteria"/>
</dbReference>
<dbReference type="HOGENOM" id="CLU_031223_2_1_11"/>
<dbReference type="OrthoDB" id="9804716at2"/>
<dbReference type="UniPathway" id="UPA00109">
    <property type="reaction ID" value="UER00187"/>
</dbReference>
<dbReference type="Proteomes" id="UP000006728">
    <property type="component" value="Chromosome"/>
</dbReference>
<dbReference type="GO" id="GO:0009986">
    <property type="term" value="C:cell surface"/>
    <property type="evidence" value="ECO:0007669"/>
    <property type="project" value="UniProtKB-SubCell"/>
</dbReference>
<dbReference type="GO" id="GO:0005576">
    <property type="term" value="C:extracellular region"/>
    <property type="evidence" value="ECO:0007669"/>
    <property type="project" value="UniProtKB-SubCell"/>
</dbReference>
<dbReference type="GO" id="GO:0000015">
    <property type="term" value="C:phosphopyruvate hydratase complex"/>
    <property type="evidence" value="ECO:0007669"/>
    <property type="project" value="InterPro"/>
</dbReference>
<dbReference type="GO" id="GO:0000287">
    <property type="term" value="F:magnesium ion binding"/>
    <property type="evidence" value="ECO:0007669"/>
    <property type="project" value="UniProtKB-UniRule"/>
</dbReference>
<dbReference type="GO" id="GO:0004634">
    <property type="term" value="F:phosphopyruvate hydratase activity"/>
    <property type="evidence" value="ECO:0007669"/>
    <property type="project" value="UniProtKB-UniRule"/>
</dbReference>
<dbReference type="GO" id="GO:0006096">
    <property type="term" value="P:glycolytic process"/>
    <property type="evidence" value="ECO:0007669"/>
    <property type="project" value="UniProtKB-UniRule"/>
</dbReference>
<dbReference type="CDD" id="cd03313">
    <property type="entry name" value="enolase"/>
    <property type="match status" value="1"/>
</dbReference>
<dbReference type="FunFam" id="3.20.20.120:FF:000001">
    <property type="entry name" value="Enolase"/>
    <property type="match status" value="1"/>
</dbReference>
<dbReference type="FunFam" id="3.30.390.10:FF:000001">
    <property type="entry name" value="Enolase"/>
    <property type="match status" value="1"/>
</dbReference>
<dbReference type="Gene3D" id="3.20.20.120">
    <property type="entry name" value="Enolase-like C-terminal domain"/>
    <property type="match status" value="1"/>
</dbReference>
<dbReference type="Gene3D" id="3.30.390.10">
    <property type="entry name" value="Enolase-like, N-terminal domain"/>
    <property type="match status" value="1"/>
</dbReference>
<dbReference type="HAMAP" id="MF_00318">
    <property type="entry name" value="Enolase"/>
    <property type="match status" value="1"/>
</dbReference>
<dbReference type="InterPro" id="IPR000941">
    <property type="entry name" value="Enolase"/>
</dbReference>
<dbReference type="InterPro" id="IPR036849">
    <property type="entry name" value="Enolase-like_C_sf"/>
</dbReference>
<dbReference type="InterPro" id="IPR029017">
    <property type="entry name" value="Enolase-like_N"/>
</dbReference>
<dbReference type="InterPro" id="IPR020810">
    <property type="entry name" value="Enolase_C"/>
</dbReference>
<dbReference type="InterPro" id="IPR020809">
    <property type="entry name" value="Enolase_CS"/>
</dbReference>
<dbReference type="InterPro" id="IPR020811">
    <property type="entry name" value="Enolase_N"/>
</dbReference>
<dbReference type="NCBIfam" id="TIGR01060">
    <property type="entry name" value="eno"/>
    <property type="match status" value="1"/>
</dbReference>
<dbReference type="PANTHER" id="PTHR11902">
    <property type="entry name" value="ENOLASE"/>
    <property type="match status" value="1"/>
</dbReference>
<dbReference type="PANTHER" id="PTHR11902:SF1">
    <property type="entry name" value="ENOLASE"/>
    <property type="match status" value="1"/>
</dbReference>
<dbReference type="Pfam" id="PF00113">
    <property type="entry name" value="Enolase_C"/>
    <property type="match status" value="1"/>
</dbReference>
<dbReference type="Pfam" id="PF03952">
    <property type="entry name" value="Enolase_N"/>
    <property type="match status" value="1"/>
</dbReference>
<dbReference type="PIRSF" id="PIRSF001400">
    <property type="entry name" value="Enolase"/>
    <property type="match status" value="1"/>
</dbReference>
<dbReference type="PRINTS" id="PR00148">
    <property type="entry name" value="ENOLASE"/>
</dbReference>
<dbReference type="SFLD" id="SFLDS00001">
    <property type="entry name" value="Enolase"/>
    <property type="match status" value="1"/>
</dbReference>
<dbReference type="SFLD" id="SFLDF00002">
    <property type="entry name" value="enolase"/>
    <property type="match status" value="1"/>
</dbReference>
<dbReference type="SMART" id="SM01192">
    <property type="entry name" value="Enolase_C"/>
    <property type="match status" value="1"/>
</dbReference>
<dbReference type="SMART" id="SM01193">
    <property type="entry name" value="Enolase_N"/>
    <property type="match status" value="1"/>
</dbReference>
<dbReference type="SUPFAM" id="SSF51604">
    <property type="entry name" value="Enolase C-terminal domain-like"/>
    <property type="match status" value="1"/>
</dbReference>
<dbReference type="SUPFAM" id="SSF54826">
    <property type="entry name" value="Enolase N-terminal domain-like"/>
    <property type="match status" value="1"/>
</dbReference>
<dbReference type="PROSITE" id="PS00164">
    <property type="entry name" value="ENOLASE"/>
    <property type="match status" value="1"/>
</dbReference>
<sequence>MAIIEQVGAREILDSRGNPTVEVEVALEDGTLTRAAVPSGASTGEHEAVELRDGDAERYGGKGVEKAVEAVLDEIGPELAGVDAIEQRVVDQKLVDLDGTPDKSRLGANAILGVSLAVAKAAAESVGLELFRYVGGPNAHVLPVPMMNILNGGAHADTGVDVQEFMIAPIGADSFSEAVRWGAETYHSLKSVLKAKGLATGLGDEGGFAPDLPSNREALDLIASAIEKAGYKLGRDIVLALDVAATEFYRDGAYHFEGSKRSAEQMAGYYGELLDAYPLVSIEDPLSEDDWDGWVRLTSEIGERVQLVGDDLFVTNPERLEEGISRRAGNALLVKVNQIGTLSETLDAVHLATSCGYKSMMSHRSGETEDTTIADLAVATGCGQIKTGAPARSERVAKYNQLLRIEETLGDAARYAGELAFPRFTPEA</sequence>
<evidence type="ECO:0000255" key="1">
    <source>
        <dbReference type="HAMAP-Rule" id="MF_00318"/>
    </source>
</evidence>
<accession>A4F804</accession>
<gene>
    <name evidence="1" type="primary">eno</name>
    <name type="ordered locus">SACE_0838</name>
</gene>
<feature type="chain" id="PRO_1000019243" description="Enolase">
    <location>
        <begin position="1"/>
        <end position="428"/>
    </location>
</feature>
<feature type="active site" description="Proton donor" evidence="1">
    <location>
        <position position="205"/>
    </location>
</feature>
<feature type="active site" description="Proton acceptor" evidence="1">
    <location>
        <position position="335"/>
    </location>
</feature>
<feature type="binding site" evidence="1">
    <location>
        <position position="163"/>
    </location>
    <ligand>
        <name>(2R)-2-phosphoglycerate</name>
        <dbReference type="ChEBI" id="CHEBI:58289"/>
    </ligand>
</feature>
<feature type="binding site" evidence="1">
    <location>
        <position position="242"/>
    </location>
    <ligand>
        <name>Mg(2+)</name>
        <dbReference type="ChEBI" id="CHEBI:18420"/>
    </ligand>
</feature>
<feature type="binding site" evidence="1">
    <location>
        <position position="283"/>
    </location>
    <ligand>
        <name>Mg(2+)</name>
        <dbReference type="ChEBI" id="CHEBI:18420"/>
    </ligand>
</feature>
<feature type="binding site" evidence="1">
    <location>
        <position position="310"/>
    </location>
    <ligand>
        <name>Mg(2+)</name>
        <dbReference type="ChEBI" id="CHEBI:18420"/>
    </ligand>
</feature>
<feature type="binding site" evidence="1">
    <location>
        <position position="335"/>
    </location>
    <ligand>
        <name>(2R)-2-phosphoglycerate</name>
        <dbReference type="ChEBI" id="CHEBI:58289"/>
    </ligand>
</feature>
<feature type="binding site" evidence="1">
    <location>
        <position position="364"/>
    </location>
    <ligand>
        <name>(2R)-2-phosphoglycerate</name>
        <dbReference type="ChEBI" id="CHEBI:58289"/>
    </ligand>
</feature>
<feature type="binding site" evidence="1">
    <location>
        <position position="365"/>
    </location>
    <ligand>
        <name>(2R)-2-phosphoglycerate</name>
        <dbReference type="ChEBI" id="CHEBI:58289"/>
    </ligand>
</feature>
<feature type="binding site" evidence="1">
    <location>
        <position position="386"/>
    </location>
    <ligand>
        <name>(2R)-2-phosphoglycerate</name>
        <dbReference type="ChEBI" id="CHEBI:58289"/>
    </ligand>
</feature>
<reference key="1">
    <citation type="journal article" date="2007" name="Nat. Biotechnol.">
        <title>Complete genome sequence of the erythromycin-producing bacterium Saccharopolyspora erythraea NRRL23338.</title>
        <authorList>
            <person name="Oliynyk M."/>
            <person name="Samborskyy M."/>
            <person name="Lester J.B."/>
            <person name="Mironenko T."/>
            <person name="Scott N."/>
            <person name="Dickens S."/>
            <person name="Haydock S.F."/>
            <person name="Leadlay P.F."/>
        </authorList>
    </citation>
    <scope>NUCLEOTIDE SEQUENCE [LARGE SCALE GENOMIC DNA]</scope>
    <source>
        <strain>ATCC 11635 / DSM 40517 / JCM 4748 / NBRC 13426 / NCIMB 8594 / NRRL 2338</strain>
    </source>
</reference>
<organism>
    <name type="scientific">Saccharopolyspora erythraea (strain ATCC 11635 / DSM 40517 / JCM 4748 / NBRC 13426 / NCIMB 8594 / NRRL 2338)</name>
    <dbReference type="NCBI Taxonomy" id="405948"/>
    <lineage>
        <taxon>Bacteria</taxon>
        <taxon>Bacillati</taxon>
        <taxon>Actinomycetota</taxon>
        <taxon>Actinomycetes</taxon>
        <taxon>Pseudonocardiales</taxon>
        <taxon>Pseudonocardiaceae</taxon>
        <taxon>Saccharopolyspora</taxon>
    </lineage>
</organism>
<comment type="function">
    <text evidence="1">Catalyzes the reversible conversion of 2-phosphoglycerate (2-PG) into phosphoenolpyruvate (PEP). It is essential for the degradation of carbohydrates via glycolysis.</text>
</comment>
<comment type="catalytic activity">
    <reaction evidence="1">
        <text>(2R)-2-phosphoglycerate = phosphoenolpyruvate + H2O</text>
        <dbReference type="Rhea" id="RHEA:10164"/>
        <dbReference type="ChEBI" id="CHEBI:15377"/>
        <dbReference type="ChEBI" id="CHEBI:58289"/>
        <dbReference type="ChEBI" id="CHEBI:58702"/>
        <dbReference type="EC" id="4.2.1.11"/>
    </reaction>
</comment>
<comment type="cofactor">
    <cofactor evidence="1">
        <name>Mg(2+)</name>
        <dbReference type="ChEBI" id="CHEBI:18420"/>
    </cofactor>
    <text evidence="1">Binds a second Mg(2+) ion via substrate during catalysis.</text>
</comment>
<comment type="pathway">
    <text evidence="1">Carbohydrate degradation; glycolysis; pyruvate from D-glyceraldehyde 3-phosphate: step 4/5.</text>
</comment>
<comment type="subcellular location">
    <subcellularLocation>
        <location evidence="1">Cytoplasm</location>
    </subcellularLocation>
    <subcellularLocation>
        <location evidence="1">Secreted</location>
    </subcellularLocation>
    <subcellularLocation>
        <location evidence="1">Cell surface</location>
    </subcellularLocation>
    <text evidence="1">Fractions of enolase are present in both the cytoplasm and on the cell surface.</text>
</comment>
<comment type="similarity">
    <text evidence="1">Belongs to the enolase family.</text>
</comment>
<keyword id="KW-0963">Cytoplasm</keyword>
<keyword id="KW-0324">Glycolysis</keyword>
<keyword id="KW-0456">Lyase</keyword>
<keyword id="KW-0460">Magnesium</keyword>
<keyword id="KW-0479">Metal-binding</keyword>
<keyword id="KW-1185">Reference proteome</keyword>
<keyword id="KW-0964">Secreted</keyword>
<protein>
    <recommendedName>
        <fullName evidence="1">Enolase</fullName>
        <ecNumber evidence="1">4.2.1.11</ecNumber>
    </recommendedName>
    <alternativeName>
        <fullName evidence="1">2-phospho-D-glycerate hydro-lyase</fullName>
    </alternativeName>
    <alternativeName>
        <fullName evidence="1">2-phosphoglycerate dehydratase</fullName>
    </alternativeName>
</protein>